<organism>
    <name type="scientific">Chlorobium chlorochromatii (strain CaD3)</name>
    <dbReference type="NCBI Taxonomy" id="340177"/>
    <lineage>
        <taxon>Bacteria</taxon>
        <taxon>Pseudomonadati</taxon>
        <taxon>Chlorobiota</taxon>
        <taxon>Chlorobiia</taxon>
        <taxon>Chlorobiales</taxon>
        <taxon>Chlorobiaceae</taxon>
        <taxon>Chlorobium/Pelodictyon group</taxon>
        <taxon>Chlorobium</taxon>
    </lineage>
</organism>
<feature type="chain" id="PRO_0000252867" description="Fluoride-specific ion channel FluC">
    <location>
        <begin position="1"/>
        <end position="129"/>
    </location>
</feature>
<feature type="transmembrane region" description="Helical" evidence="1">
    <location>
        <begin position="8"/>
        <end position="28"/>
    </location>
</feature>
<feature type="transmembrane region" description="Helical" evidence="1">
    <location>
        <begin position="34"/>
        <end position="54"/>
    </location>
</feature>
<feature type="transmembrane region" description="Helical" evidence="1">
    <location>
        <begin position="70"/>
        <end position="90"/>
    </location>
</feature>
<feature type="transmembrane region" description="Helical" evidence="1">
    <location>
        <begin position="102"/>
        <end position="122"/>
    </location>
</feature>
<feature type="binding site" evidence="1">
    <location>
        <position position="78"/>
    </location>
    <ligand>
        <name>Na(+)</name>
        <dbReference type="ChEBI" id="CHEBI:29101"/>
        <note>structural</note>
    </ligand>
</feature>
<feature type="binding site" evidence="1">
    <location>
        <position position="81"/>
    </location>
    <ligand>
        <name>Na(+)</name>
        <dbReference type="ChEBI" id="CHEBI:29101"/>
        <note>structural</note>
    </ligand>
</feature>
<accession>Q3AUE0</accession>
<keyword id="KW-0997">Cell inner membrane</keyword>
<keyword id="KW-1003">Cell membrane</keyword>
<keyword id="KW-0407">Ion channel</keyword>
<keyword id="KW-0406">Ion transport</keyword>
<keyword id="KW-0472">Membrane</keyword>
<keyword id="KW-0479">Metal-binding</keyword>
<keyword id="KW-0915">Sodium</keyword>
<keyword id="KW-0812">Transmembrane</keyword>
<keyword id="KW-1133">Transmembrane helix</keyword>
<keyword id="KW-0813">Transport</keyword>
<evidence type="ECO:0000255" key="1">
    <source>
        <dbReference type="HAMAP-Rule" id="MF_00454"/>
    </source>
</evidence>
<proteinExistence type="inferred from homology"/>
<protein>
    <recommendedName>
        <fullName evidence="1">Fluoride-specific ion channel FluC</fullName>
    </recommendedName>
</protein>
<name>FLUC_CHLCH</name>
<dbReference type="EMBL" id="CP000108">
    <property type="protein sequence ID" value="ABB27291.1"/>
    <property type="molecule type" value="Genomic_DNA"/>
</dbReference>
<dbReference type="SMR" id="Q3AUE0"/>
<dbReference type="STRING" id="340177.Cag_0012"/>
<dbReference type="KEGG" id="cch:Cag_0012"/>
<dbReference type="eggNOG" id="COG0239">
    <property type="taxonomic scope" value="Bacteria"/>
</dbReference>
<dbReference type="HOGENOM" id="CLU_114342_3_2_10"/>
<dbReference type="OrthoDB" id="9815830at2"/>
<dbReference type="GO" id="GO:0005886">
    <property type="term" value="C:plasma membrane"/>
    <property type="evidence" value="ECO:0007669"/>
    <property type="project" value="UniProtKB-SubCell"/>
</dbReference>
<dbReference type="GO" id="GO:0062054">
    <property type="term" value="F:fluoride channel activity"/>
    <property type="evidence" value="ECO:0007669"/>
    <property type="project" value="UniProtKB-UniRule"/>
</dbReference>
<dbReference type="GO" id="GO:0046872">
    <property type="term" value="F:metal ion binding"/>
    <property type="evidence" value="ECO:0007669"/>
    <property type="project" value="UniProtKB-KW"/>
</dbReference>
<dbReference type="GO" id="GO:0140114">
    <property type="term" value="P:cellular detoxification of fluoride"/>
    <property type="evidence" value="ECO:0007669"/>
    <property type="project" value="UniProtKB-UniRule"/>
</dbReference>
<dbReference type="HAMAP" id="MF_00454">
    <property type="entry name" value="FluC"/>
    <property type="match status" value="1"/>
</dbReference>
<dbReference type="InterPro" id="IPR003691">
    <property type="entry name" value="FluC"/>
</dbReference>
<dbReference type="NCBIfam" id="TIGR00494">
    <property type="entry name" value="crcB"/>
    <property type="match status" value="1"/>
</dbReference>
<dbReference type="PANTHER" id="PTHR28259">
    <property type="entry name" value="FLUORIDE EXPORT PROTEIN 1-RELATED"/>
    <property type="match status" value="1"/>
</dbReference>
<dbReference type="PANTHER" id="PTHR28259:SF1">
    <property type="entry name" value="FLUORIDE EXPORT PROTEIN 1-RELATED"/>
    <property type="match status" value="1"/>
</dbReference>
<dbReference type="Pfam" id="PF02537">
    <property type="entry name" value="CRCB"/>
    <property type="match status" value="1"/>
</dbReference>
<comment type="function">
    <text evidence="1">Fluoride-specific ion channel. Important for reducing fluoride concentration in the cell, thus reducing its toxicity.</text>
</comment>
<comment type="catalytic activity">
    <reaction evidence="1">
        <text>fluoride(in) = fluoride(out)</text>
        <dbReference type="Rhea" id="RHEA:76159"/>
        <dbReference type="ChEBI" id="CHEBI:17051"/>
    </reaction>
    <physiologicalReaction direction="left-to-right" evidence="1">
        <dbReference type="Rhea" id="RHEA:76160"/>
    </physiologicalReaction>
</comment>
<comment type="activity regulation">
    <text evidence="1">Na(+) is not transported, but it plays an essential structural role and its presence is essential for fluoride channel function.</text>
</comment>
<comment type="subcellular location">
    <subcellularLocation>
        <location evidence="1">Cell inner membrane</location>
        <topology evidence="1">Multi-pass membrane protein</topology>
    </subcellularLocation>
</comment>
<comment type="similarity">
    <text evidence="1">Belongs to the fluoride channel Fluc/FEX (TC 1.A.43) family.</text>
</comment>
<gene>
    <name evidence="1" type="primary">fluC</name>
    <name evidence="1" type="synonym">crcB</name>
    <name type="ordered locus">Cag_0012</name>
</gene>
<reference key="1">
    <citation type="submission" date="2005-08" db="EMBL/GenBank/DDBJ databases">
        <title>Complete sequence of Chlorobium chlorochromatii CaD3.</title>
        <authorList>
            <consortium name="US DOE Joint Genome Institute"/>
            <person name="Copeland A."/>
            <person name="Lucas S."/>
            <person name="Lapidus A."/>
            <person name="Barry K."/>
            <person name="Detter J.C."/>
            <person name="Glavina T."/>
            <person name="Hammon N."/>
            <person name="Israni S."/>
            <person name="Pitluck S."/>
            <person name="Bryant D."/>
            <person name="Schmutz J."/>
            <person name="Larimer F."/>
            <person name="Land M."/>
            <person name="Kyrpides N."/>
            <person name="Ivanova N."/>
            <person name="Richardson P."/>
        </authorList>
    </citation>
    <scope>NUCLEOTIDE SEQUENCE [LARGE SCALE GENOMIC DNA]</scope>
    <source>
        <strain>CaD3</strain>
    </source>
</reference>
<sequence length="129" mass="13759">MVDKAAHILLVGVGGFLGSVARYLVALWMAPITAVFPFATLTVNLLGSFLIGFISELALSTSLISPSTRIFLVTGFCGGFTTFSSYMIEHSALLRDGEHLYAALYLFGSLIGGFIALYLGIISARWMAG</sequence>